<organism>
    <name type="scientific">Vibrio cholerae serotype O1 (strain ATCC 39541 / Classical Ogawa 395 / O395)</name>
    <dbReference type="NCBI Taxonomy" id="345073"/>
    <lineage>
        <taxon>Bacteria</taxon>
        <taxon>Pseudomonadati</taxon>
        <taxon>Pseudomonadota</taxon>
        <taxon>Gammaproteobacteria</taxon>
        <taxon>Vibrionales</taxon>
        <taxon>Vibrionaceae</taxon>
        <taxon>Vibrio</taxon>
    </lineage>
</organism>
<gene>
    <name evidence="1" type="primary">recO</name>
    <name type="ordered locus">VC0395_A2037</name>
    <name type="ordered locus">VC395_2574</name>
</gene>
<name>RECO_VIBC3</name>
<dbReference type="EMBL" id="CP000627">
    <property type="protein sequence ID" value="ABQ19803.1"/>
    <property type="molecule type" value="Genomic_DNA"/>
</dbReference>
<dbReference type="EMBL" id="CP001235">
    <property type="protein sequence ID" value="ACP10561.1"/>
    <property type="molecule type" value="Genomic_DNA"/>
</dbReference>
<dbReference type="RefSeq" id="WP_001279493.1">
    <property type="nucleotide sequence ID" value="NZ_JAACZH010000010.1"/>
</dbReference>
<dbReference type="SMR" id="A5F5H6"/>
<dbReference type="GeneID" id="94012893"/>
<dbReference type="KEGG" id="vco:VC0395_A2037"/>
<dbReference type="KEGG" id="vcr:VC395_2574"/>
<dbReference type="PATRIC" id="fig|345073.21.peg.2479"/>
<dbReference type="eggNOG" id="COG1381">
    <property type="taxonomic scope" value="Bacteria"/>
</dbReference>
<dbReference type="HOGENOM" id="CLU_066645_1_0_6"/>
<dbReference type="OrthoDB" id="9804792at2"/>
<dbReference type="Proteomes" id="UP000000249">
    <property type="component" value="Chromosome 2"/>
</dbReference>
<dbReference type="GO" id="GO:0043590">
    <property type="term" value="C:bacterial nucleoid"/>
    <property type="evidence" value="ECO:0007669"/>
    <property type="project" value="TreeGrafter"/>
</dbReference>
<dbReference type="GO" id="GO:0006310">
    <property type="term" value="P:DNA recombination"/>
    <property type="evidence" value="ECO:0007669"/>
    <property type="project" value="UniProtKB-UniRule"/>
</dbReference>
<dbReference type="GO" id="GO:0006302">
    <property type="term" value="P:double-strand break repair"/>
    <property type="evidence" value="ECO:0007669"/>
    <property type="project" value="TreeGrafter"/>
</dbReference>
<dbReference type="Gene3D" id="2.40.50.140">
    <property type="entry name" value="Nucleic acid-binding proteins"/>
    <property type="match status" value="1"/>
</dbReference>
<dbReference type="Gene3D" id="1.20.1440.120">
    <property type="entry name" value="Recombination protein O, C-terminal domain"/>
    <property type="match status" value="1"/>
</dbReference>
<dbReference type="HAMAP" id="MF_00201">
    <property type="entry name" value="RecO"/>
    <property type="match status" value="1"/>
</dbReference>
<dbReference type="InterPro" id="IPR037278">
    <property type="entry name" value="ARFGAP/RecO"/>
</dbReference>
<dbReference type="InterPro" id="IPR022572">
    <property type="entry name" value="DNA_rep/recomb_RecO_N"/>
</dbReference>
<dbReference type="InterPro" id="IPR012340">
    <property type="entry name" value="NA-bd_OB-fold"/>
</dbReference>
<dbReference type="InterPro" id="IPR003717">
    <property type="entry name" value="RecO"/>
</dbReference>
<dbReference type="InterPro" id="IPR042242">
    <property type="entry name" value="RecO_C"/>
</dbReference>
<dbReference type="NCBIfam" id="TIGR00613">
    <property type="entry name" value="reco"/>
    <property type="match status" value="1"/>
</dbReference>
<dbReference type="PANTHER" id="PTHR33991">
    <property type="entry name" value="DNA REPAIR PROTEIN RECO"/>
    <property type="match status" value="1"/>
</dbReference>
<dbReference type="PANTHER" id="PTHR33991:SF1">
    <property type="entry name" value="DNA REPAIR PROTEIN RECO"/>
    <property type="match status" value="1"/>
</dbReference>
<dbReference type="Pfam" id="PF02565">
    <property type="entry name" value="RecO_C"/>
    <property type="match status" value="1"/>
</dbReference>
<dbReference type="Pfam" id="PF11967">
    <property type="entry name" value="RecO_N"/>
    <property type="match status" value="1"/>
</dbReference>
<dbReference type="SUPFAM" id="SSF57863">
    <property type="entry name" value="ArfGap/RecO-like zinc finger"/>
    <property type="match status" value="1"/>
</dbReference>
<dbReference type="SUPFAM" id="SSF50249">
    <property type="entry name" value="Nucleic acid-binding proteins"/>
    <property type="match status" value="1"/>
</dbReference>
<feature type="chain" id="PRO_1000071725" description="DNA repair protein RecO">
    <location>
        <begin position="1"/>
        <end position="241"/>
    </location>
</feature>
<evidence type="ECO:0000255" key="1">
    <source>
        <dbReference type="HAMAP-Rule" id="MF_00201"/>
    </source>
</evidence>
<comment type="function">
    <text evidence="1">Involved in DNA repair and RecF pathway recombination.</text>
</comment>
<comment type="similarity">
    <text evidence="1">Belongs to the RecO family.</text>
</comment>
<accession>A5F5H6</accession>
<accession>C3M4V0</accession>
<reference key="1">
    <citation type="submission" date="2007-03" db="EMBL/GenBank/DDBJ databases">
        <authorList>
            <person name="Heidelberg J."/>
        </authorList>
    </citation>
    <scope>NUCLEOTIDE SEQUENCE [LARGE SCALE GENOMIC DNA]</scope>
    <source>
        <strain>ATCC 39541 / Classical Ogawa 395 / O395</strain>
    </source>
</reference>
<reference key="2">
    <citation type="journal article" date="2008" name="PLoS ONE">
        <title>A recalibrated molecular clock and independent origins for the cholera pandemic clones.</title>
        <authorList>
            <person name="Feng L."/>
            <person name="Reeves P.R."/>
            <person name="Lan R."/>
            <person name="Ren Y."/>
            <person name="Gao C."/>
            <person name="Zhou Z."/>
            <person name="Ren Y."/>
            <person name="Cheng J."/>
            <person name="Wang W."/>
            <person name="Wang J."/>
            <person name="Qian W."/>
            <person name="Li D."/>
            <person name="Wang L."/>
        </authorList>
    </citation>
    <scope>NUCLEOTIDE SEQUENCE [LARGE SCALE GENOMIC DNA]</scope>
    <source>
        <strain>ATCC 39541 / Classical Ogawa 395 / O395</strain>
    </source>
</reference>
<protein>
    <recommendedName>
        <fullName evidence="1">DNA repair protein RecO</fullName>
    </recommendedName>
    <alternativeName>
        <fullName evidence="1">Recombination protein O</fullName>
    </alternativeName>
</protein>
<sequence>MSDGLQRCFVLHRRPYSESSLILDVFSEEYGRVTLMAKGARGKRSNLKGALQPFTPLLLKWSGNGSMKTLRQAEPISLGLPLSGVYLYSAMYINELVDRVLMPEVASPGLFHDYLFALTELAQSTNPEPALRRFELALLAAMGYGVDFLHCAGTGEPVSPDMTYRYREQKGFIASVRRDNLTFLGNELIAISERRFTSKEQLQAAKRFTRLALKPYLGGKPLKSRELFRQTTLPRARSTEE</sequence>
<keyword id="KW-0227">DNA damage</keyword>
<keyword id="KW-0233">DNA recombination</keyword>
<keyword id="KW-0234">DNA repair</keyword>
<proteinExistence type="inferred from homology"/>